<organism>
    <name type="scientific">Staphylococcus aureus (strain JH1)</name>
    <dbReference type="NCBI Taxonomy" id="359787"/>
    <lineage>
        <taxon>Bacteria</taxon>
        <taxon>Bacillati</taxon>
        <taxon>Bacillota</taxon>
        <taxon>Bacilli</taxon>
        <taxon>Bacillales</taxon>
        <taxon>Staphylococcaceae</taxon>
        <taxon>Staphylococcus</taxon>
    </lineage>
</organism>
<feature type="chain" id="PRO_0000341851" description="2-succinyl-5-enolpyruvyl-6-hydroxy-3-cyclohexene-1-carboxylate synthase">
    <location>
        <begin position="1"/>
        <end position="557"/>
    </location>
</feature>
<dbReference type="EC" id="2.2.1.9" evidence="1"/>
<dbReference type="EMBL" id="CP000736">
    <property type="protein sequence ID" value="ABR51979.1"/>
    <property type="molecule type" value="Genomic_DNA"/>
</dbReference>
<dbReference type="SMR" id="A6U0L1"/>
<dbReference type="KEGG" id="sah:SaurJH1_1125"/>
<dbReference type="HOGENOM" id="CLU_006051_3_0_9"/>
<dbReference type="UniPathway" id="UPA00079"/>
<dbReference type="UniPathway" id="UPA01057">
    <property type="reaction ID" value="UER00164"/>
</dbReference>
<dbReference type="GO" id="GO:0070204">
    <property type="term" value="F:2-succinyl-5-enolpyruvyl-6-hydroxy-3-cyclohexene-1-carboxylic-acid synthase activity"/>
    <property type="evidence" value="ECO:0007669"/>
    <property type="project" value="UniProtKB-UniRule"/>
</dbReference>
<dbReference type="GO" id="GO:0000287">
    <property type="term" value="F:magnesium ion binding"/>
    <property type="evidence" value="ECO:0007669"/>
    <property type="project" value="UniProtKB-UniRule"/>
</dbReference>
<dbReference type="GO" id="GO:0030145">
    <property type="term" value="F:manganese ion binding"/>
    <property type="evidence" value="ECO:0007669"/>
    <property type="project" value="UniProtKB-UniRule"/>
</dbReference>
<dbReference type="GO" id="GO:0030976">
    <property type="term" value="F:thiamine pyrophosphate binding"/>
    <property type="evidence" value="ECO:0007669"/>
    <property type="project" value="UniProtKB-UniRule"/>
</dbReference>
<dbReference type="GO" id="GO:0009234">
    <property type="term" value="P:menaquinone biosynthetic process"/>
    <property type="evidence" value="ECO:0007669"/>
    <property type="project" value="UniProtKB-UniRule"/>
</dbReference>
<dbReference type="CDD" id="cd07037">
    <property type="entry name" value="TPP_PYR_MenD"/>
    <property type="match status" value="1"/>
</dbReference>
<dbReference type="CDD" id="cd02009">
    <property type="entry name" value="TPP_SHCHC_synthase"/>
    <property type="match status" value="1"/>
</dbReference>
<dbReference type="Gene3D" id="3.40.50.970">
    <property type="match status" value="2"/>
</dbReference>
<dbReference type="Gene3D" id="3.40.50.1220">
    <property type="entry name" value="TPP-binding domain"/>
    <property type="match status" value="1"/>
</dbReference>
<dbReference type="HAMAP" id="MF_01659">
    <property type="entry name" value="MenD"/>
    <property type="match status" value="1"/>
</dbReference>
<dbReference type="InterPro" id="IPR004433">
    <property type="entry name" value="MenaQ_synth_MenD"/>
</dbReference>
<dbReference type="InterPro" id="IPR032264">
    <property type="entry name" value="MenD_middle"/>
</dbReference>
<dbReference type="InterPro" id="IPR029061">
    <property type="entry name" value="THDP-binding"/>
</dbReference>
<dbReference type="InterPro" id="IPR012001">
    <property type="entry name" value="Thiamin_PyroP_enz_TPP-bd_dom"/>
</dbReference>
<dbReference type="InterPro" id="IPR011766">
    <property type="entry name" value="TPP_enzyme_TPP-bd"/>
</dbReference>
<dbReference type="NCBIfam" id="TIGR00173">
    <property type="entry name" value="menD"/>
    <property type="match status" value="1"/>
</dbReference>
<dbReference type="PANTHER" id="PTHR42916">
    <property type="entry name" value="2-SUCCINYL-5-ENOLPYRUVYL-6-HYDROXY-3-CYCLOHEXENE-1-CARBOXYLATE SYNTHASE"/>
    <property type="match status" value="1"/>
</dbReference>
<dbReference type="PANTHER" id="PTHR42916:SF1">
    <property type="entry name" value="PROTEIN PHYLLO, CHLOROPLASTIC"/>
    <property type="match status" value="1"/>
</dbReference>
<dbReference type="Pfam" id="PF02775">
    <property type="entry name" value="TPP_enzyme_C"/>
    <property type="match status" value="1"/>
</dbReference>
<dbReference type="Pfam" id="PF16582">
    <property type="entry name" value="TPP_enzyme_M_2"/>
    <property type="match status" value="1"/>
</dbReference>
<dbReference type="Pfam" id="PF02776">
    <property type="entry name" value="TPP_enzyme_N"/>
    <property type="match status" value="1"/>
</dbReference>
<dbReference type="PIRSF" id="PIRSF004983">
    <property type="entry name" value="MenD"/>
    <property type="match status" value="1"/>
</dbReference>
<dbReference type="SUPFAM" id="SSF52518">
    <property type="entry name" value="Thiamin diphosphate-binding fold (THDP-binding)"/>
    <property type="match status" value="2"/>
</dbReference>
<protein>
    <recommendedName>
        <fullName evidence="1">2-succinyl-5-enolpyruvyl-6-hydroxy-3-cyclohexene-1-carboxylate synthase</fullName>
        <shortName evidence="1">SEPHCHC synthase</shortName>
        <ecNumber evidence="1">2.2.1.9</ecNumber>
    </recommendedName>
    <alternativeName>
        <fullName evidence="1">Menaquinone biosynthesis protein MenD</fullName>
    </alternativeName>
</protein>
<comment type="function">
    <text evidence="1">Catalyzes the thiamine diphosphate-dependent decarboxylation of 2-oxoglutarate and the subsequent addition of the resulting succinic semialdehyde-thiamine pyrophosphate anion to isochorismate to yield 2-succinyl-5-enolpyruvyl-6-hydroxy-3-cyclohexene-1-carboxylate (SEPHCHC).</text>
</comment>
<comment type="catalytic activity">
    <reaction evidence="1">
        <text>isochorismate + 2-oxoglutarate + H(+) = 5-enolpyruvoyl-6-hydroxy-2-succinyl-cyclohex-3-ene-1-carboxylate + CO2</text>
        <dbReference type="Rhea" id="RHEA:25593"/>
        <dbReference type="ChEBI" id="CHEBI:15378"/>
        <dbReference type="ChEBI" id="CHEBI:16526"/>
        <dbReference type="ChEBI" id="CHEBI:16810"/>
        <dbReference type="ChEBI" id="CHEBI:29780"/>
        <dbReference type="ChEBI" id="CHEBI:58818"/>
        <dbReference type="EC" id="2.2.1.9"/>
    </reaction>
</comment>
<comment type="cofactor">
    <cofactor evidence="1">
        <name>Mg(2+)</name>
        <dbReference type="ChEBI" id="CHEBI:18420"/>
    </cofactor>
    <cofactor evidence="1">
        <name>Mn(2+)</name>
        <dbReference type="ChEBI" id="CHEBI:29035"/>
    </cofactor>
</comment>
<comment type="cofactor">
    <cofactor evidence="1">
        <name>thiamine diphosphate</name>
        <dbReference type="ChEBI" id="CHEBI:58937"/>
    </cofactor>
    <text evidence="1">Binds 1 thiamine pyrophosphate per subunit.</text>
</comment>
<comment type="pathway">
    <text evidence="1">Quinol/quinone metabolism; 1,4-dihydroxy-2-naphthoate biosynthesis; 1,4-dihydroxy-2-naphthoate from chorismate: step 2/7.</text>
</comment>
<comment type="pathway">
    <text evidence="1">Quinol/quinone metabolism; menaquinone biosynthesis.</text>
</comment>
<comment type="subunit">
    <text evidence="1">Homodimer.</text>
</comment>
<comment type="similarity">
    <text evidence="1">Belongs to the TPP enzyme family. MenD subfamily.</text>
</comment>
<proteinExistence type="inferred from homology"/>
<evidence type="ECO:0000255" key="1">
    <source>
        <dbReference type="HAMAP-Rule" id="MF_01659"/>
    </source>
</evidence>
<accession>A6U0L1</accession>
<name>MEND_STAA2</name>
<gene>
    <name evidence="1" type="primary">menD</name>
    <name type="ordered locus">SaurJH1_1125</name>
</gene>
<sequence length="557" mass="63091">MGNHKAALTKQVFTFASELYAYGVREVVISPGSRSTPLALAFEAHPNIKTWIHPDERSAAFFAVGLIKGSERPVAILCTSGTAAANYTPAIAESQISRIPLIVLTSDRPHELRSVGAPQAINQVNMFNNYVSYEFDMPIADDSKETINAIYYQMQIASQYLYGPHKGPIHFNLPFRDPLTPDLNATELLTSEMKILPHYQKSIDASALRHILNKKKGLIIVGDMQHQEVDQILTYSTIYDLPILADPLSHLRKFDHPNVICTYDLLFRSGLDLNVDFVIRVGKPVISKKLNQWLKKTDAFQILVQNNDKIDVFPIAPDISYEISANDFFRSLMEDTTINRVSWLEKWQCLEKKGRKEIKCYLEQATDESAFVGELIKKTSEKDALFISNSMPIRDVDNLLLNKNIDVYANRGANGIDGIVSTALGMAVHKRITLLIGDLSFYHDMNGLLMSKLNNIQMNIVLLNNDGGGIFSYLPQKESATDYFERLFGTPTGLDFEYTAKLYQFDFKRFNSVSEFKNATLLSETSTIYELITNREDNFKQHQILYQKLSEMIHDTL</sequence>
<keyword id="KW-0460">Magnesium</keyword>
<keyword id="KW-0464">Manganese</keyword>
<keyword id="KW-0474">Menaquinone biosynthesis</keyword>
<keyword id="KW-0479">Metal-binding</keyword>
<keyword id="KW-0786">Thiamine pyrophosphate</keyword>
<keyword id="KW-0808">Transferase</keyword>
<reference key="1">
    <citation type="submission" date="2007-06" db="EMBL/GenBank/DDBJ databases">
        <title>Complete sequence of chromosome of Staphylococcus aureus subsp. aureus JH1.</title>
        <authorList>
            <consortium name="US DOE Joint Genome Institute"/>
            <person name="Copeland A."/>
            <person name="Lucas S."/>
            <person name="Lapidus A."/>
            <person name="Barry K."/>
            <person name="Detter J.C."/>
            <person name="Glavina del Rio T."/>
            <person name="Hammon N."/>
            <person name="Israni S."/>
            <person name="Dalin E."/>
            <person name="Tice H."/>
            <person name="Pitluck S."/>
            <person name="Chain P."/>
            <person name="Malfatti S."/>
            <person name="Shin M."/>
            <person name="Vergez L."/>
            <person name="Schmutz J."/>
            <person name="Larimer F."/>
            <person name="Land M."/>
            <person name="Hauser L."/>
            <person name="Kyrpides N."/>
            <person name="Ivanova N."/>
            <person name="Tomasz A."/>
            <person name="Richardson P."/>
        </authorList>
    </citation>
    <scope>NUCLEOTIDE SEQUENCE [LARGE SCALE GENOMIC DNA]</scope>
    <source>
        <strain>JH1</strain>
    </source>
</reference>